<comment type="function">
    <text evidence="1">Involved in O antigen modification. Catalyzes the transfer of the glucose residue from UDP-glucose to a lipid carrier (By similarity).</text>
</comment>
<comment type="subcellular location">
    <subcellularLocation>
        <location evidence="3">Cell membrane</location>
        <topology evidence="3">Multi-pass membrane protein</topology>
    </subcellularLocation>
</comment>
<comment type="similarity">
    <text evidence="3">Belongs to the glycosyltransferase 2 family. GtrB subfamily.</text>
</comment>
<gene>
    <name type="primary">gtrB</name>
    <name type="synonym">gtrBI</name>
    <name type="ordered locus">SF0306</name>
    <name type="ordered locus">S0320</name>
</gene>
<keyword id="KW-1003">Cell membrane</keyword>
<keyword id="KW-0328">Glycosyltransferase</keyword>
<keyword id="KW-0472">Membrane</keyword>
<keyword id="KW-1185">Reference proteome</keyword>
<keyword id="KW-0808">Transferase</keyword>
<keyword id="KW-0812">Transmembrane</keyword>
<keyword id="KW-1133">Transmembrane helix</keyword>
<feature type="chain" id="PRO_0000059191" description="SfII prophage-derived bactoprenol glucosyl transferase">
    <location>
        <begin position="1"/>
        <end position="309"/>
    </location>
</feature>
<feature type="transmembrane region" description="Helical" evidence="2">
    <location>
        <begin position="229"/>
        <end position="249"/>
    </location>
</feature>
<feature type="transmembrane region" description="Helical" evidence="2">
    <location>
        <begin position="263"/>
        <end position="283"/>
    </location>
</feature>
<organism>
    <name type="scientific">Shigella flexneri</name>
    <dbReference type="NCBI Taxonomy" id="623"/>
    <lineage>
        <taxon>Bacteria</taxon>
        <taxon>Pseudomonadati</taxon>
        <taxon>Pseudomonadota</taxon>
        <taxon>Gammaproteobacteria</taxon>
        <taxon>Enterobacterales</taxon>
        <taxon>Enterobacteriaceae</taxon>
        <taxon>Shigella</taxon>
    </lineage>
</organism>
<sequence>MKISLVVPVFNEEEAIPVFYKTVREFQELKPYEVEIVFINDGSKDATESIINALAVSDPLVVPLSFTRNFGKEPALFAGLDHASGDAVIPIDVDLQDPIEVIPHLIEKWQAGADMVLAKRSDRSTDGRLKRKTAEWFYKLHNKISTPKIEENVGDFRLMSREVVENIKLLPERNLFMKGILSWVGGQTDVVEYVRAERVAGISKFNGWKLWNLALEGITSFSTFPLRVWTYIGLFVASISFLYGAWMIIDTLVFGNPVRGYPSLLVSILFLGGVQLIGIGVLGEYIGRIYIEVKNRPKYIIKKSHRGNP</sequence>
<name>GTRB_SHIFL</name>
<protein>
    <recommendedName>
        <fullName>SfII prophage-derived bactoprenol glucosyl transferase</fullName>
        <ecNumber>2.4.1.-</ecNumber>
    </recommendedName>
</protein>
<dbReference type="EC" id="2.4.1.-"/>
<dbReference type="EMBL" id="AE005674">
    <property type="protein sequence ID" value="AAN41965.1"/>
    <property type="molecule type" value="Genomic_DNA"/>
</dbReference>
<dbReference type="EMBL" id="AE014073">
    <property type="protein sequence ID" value="AAP15848.1"/>
    <property type="molecule type" value="Genomic_DNA"/>
</dbReference>
<dbReference type="RefSeq" id="NP_706258.1">
    <property type="nucleotide sequence ID" value="NC_004337.2"/>
</dbReference>
<dbReference type="RefSeq" id="WP_000703658.1">
    <property type="nucleotide sequence ID" value="NZ_UAUS01000007.1"/>
</dbReference>
<dbReference type="SMR" id="P68667"/>
<dbReference type="STRING" id="198214.SF0306"/>
<dbReference type="PaxDb" id="198214-SF0306"/>
<dbReference type="DNASU" id="1076753"/>
<dbReference type="GeneID" id="1025741"/>
<dbReference type="KEGG" id="sfl:SF0306"/>
<dbReference type="KEGG" id="sfx:S0320"/>
<dbReference type="PATRIC" id="fig|198214.7.peg.351"/>
<dbReference type="HOGENOM" id="CLU_033536_0_1_6"/>
<dbReference type="Proteomes" id="UP000001006">
    <property type="component" value="Chromosome"/>
</dbReference>
<dbReference type="Proteomes" id="UP000002673">
    <property type="component" value="Chromosome"/>
</dbReference>
<dbReference type="GO" id="GO:0005886">
    <property type="term" value="C:plasma membrane"/>
    <property type="evidence" value="ECO:0007669"/>
    <property type="project" value="UniProtKB-SubCell"/>
</dbReference>
<dbReference type="GO" id="GO:0016757">
    <property type="term" value="F:glycosyltransferase activity"/>
    <property type="evidence" value="ECO:0007669"/>
    <property type="project" value="UniProtKB-KW"/>
</dbReference>
<dbReference type="CDD" id="cd04187">
    <property type="entry name" value="DPM1_like_bac"/>
    <property type="match status" value="1"/>
</dbReference>
<dbReference type="FunFam" id="3.90.550.10:FF:000099">
    <property type="entry name" value="Bactoprenol glucosyl transferase"/>
    <property type="match status" value="1"/>
</dbReference>
<dbReference type="Gene3D" id="3.90.550.10">
    <property type="entry name" value="Spore Coat Polysaccharide Biosynthesis Protein SpsA, Chain A"/>
    <property type="match status" value="1"/>
</dbReference>
<dbReference type="InterPro" id="IPR001173">
    <property type="entry name" value="Glyco_trans_2-like"/>
</dbReference>
<dbReference type="InterPro" id="IPR050256">
    <property type="entry name" value="Glycosyltransferase_2"/>
</dbReference>
<dbReference type="InterPro" id="IPR029044">
    <property type="entry name" value="Nucleotide-diphossugar_trans"/>
</dbReference>
<dbReference type="PANTHER" id="PTHR48090:SF1">
    <property type="entry name" value="PROPHAGE BACTOPRENOL GLUCOSYL TRANSFERASE HOMOLOG"/>
    <property type="match status" value="1"/>
</dbReference>
<dbReference type="PANTHER" id="PTHR48090">
    <property type="entry name" value="UNDECAPRENYL-PHOSPHATE 4-DEOXY-4-FORMAMIDO-L-ARABINOSE TRANSFERASE-RELATED"/>
    <property type="match status" value="1"/>
</dbReference>
<dbReference type="Pfam" id="PF00535">
    <property type="entry name" value="Glycos_transf_2"/>
    <property type="match status" value="1"/>
</dbReference>
<dbReference type="SUPFAM" id="SSF53448">
    <property type="entry name" value="Nucleotide-diphospho-sugar transferases"/>
    <property type="match status" value="1"/>
</dbReference>
<accession>P68667</accession>
<accession>O21943</accession>
<reference key="1">
    <citation type="journal article" date="2002" name="Nucleic Acids Res.">
        <title>Genome sequence of Shigella flexneri 2a: insights into pathogenicity through comparison with genomes of Escherichia coli K12 and O157.</title>
        <authorList>
            <person name="Jin Q."/>
            <person name="Yuan Z."/>
            <person name="Xu J."/>
            <person name="Wang Y."/>
            <person name="Shen Y."/>
            <person name="Lu W."/>
            <person name="Wang J."/>
            <person name="Liu H."/>
            <person name="Yang J."/>
            <person name="Yang F."/>
            <person name="Zhang X."/>
            <person name="Zhang J."/>
            <person name="Yang G."/>
            <person name="Wu H."/>
            <person name="Qu D."/>
            <person name="Dong J."/>
            <person name="Sun L."/>
            <person name="Xue Y."/>
            <person name="Zhao A."/>
            <person name="Gao Y."/>
            <person name="Zhu J."/>
            <person name="Kan B."/>
            <person name="Ding K."/>
            <person name="Chen S."/>
            <person name="Cheng H."/>
            <person name="Yao Z."/>
            <person name="He B."/>
            <person name="Chen R."/>
            <person name="Ma D."/>
            <person name="Qiang B."/>
            <person name="Wen Y."/>
            <person name="Hou Y."/>
            <person name="Yu J."/>
        </authorList>
    </citation>
    <scope>NUCLEOTIDE SEQUENCE [LARGE SCALE GENOMIC DNA]</scope>
    <source>
        <strain>301 / Serotype 2a</strain>
    </source>
</reference>
<reference key="2">
    <citation type="journal article" date="2003" name="Infect. Immun.">
        <title>Complete genome sequence and comparative genomics of Shigella flexneri serotype 2a strain 2457T.</title>
        <authorList>
            <person name="Wei J."/>
            <person name="Goldberg M.B."/>
            <person name="Burland V."/>
            <person name="Venkatesan M.M."/>
            <person name="Deng W."/>
            <person name="Fournier G."/>
            <person name="Mayhew G.F."/>
            <person name="Plunkett G. III"/>
            <person name="Rose D.J."/>
            <person name="Darling A."/>
            <person name="Mau B."/>
            <person name="Perna N.T."/>
            <person name="Payne S.M."/>
            <person name="Runyen-Janecky L.J."/>
            <person name="Zhou S."/>
            <person name="Schwartz D.C."/>
            <person name="Blattner F.R."/>
        </authorList>
    </citation>
    <scope>NUCLEOTIDE SEQUENCE [LARGE SCALE GENOMIC DNA]</scope>
    <source>
        <strain>ATCC 700930 / 2457T / Serotype 2a</strain>
    </source>
</reference>
<evidence type="ECO:0000250" key="1"/>
<evidence type="ECO:0000255" key="2"/>
<evidence type="ECO:0000305" key="3"/>
<proteinExistence type="inferred from homology"/>